<name>PETL_NICGU</name>
<protein>
    <recommendedName>
        <fullName evidence="1">Cytochrome b6-f complex subunit 6</fullName>
    </recommendedName>
    <alternativeName>
        <fullName evidence="1">Cytochrome b6-f complex subunit PetL</fullName>
    </alternativeName>
    <alternativeName>
        <fullName evidence="1">Cytochrome b6-f complex subunit VI</fullName>
    </alternativeName>
</protein>
<organism>
    <name type="scientific">Nicotiana glutinosa</name>
    <name type="common">Tobacco</name>
    <dbReference type="NCBI Taxonomy" id="35889"/>
    <lineage>
        <taxon>Eukaryota</taxon>
        <taxon>Viridiplantae</taxon>
        <taxon>Streptophyta</taxon>
        <taxon>Embryophyta</taxon>
        <taxon>Tracheophyta</taxon>
        <taxon>Spermatophyta</taxon>
        <taxon>Magnoliopsida</taxon>
        <taxon>eudicotyledons</taxon>
        <taxon>Gunneridae</taxon>
        <taxon>Pentapetalae</taxon>
        <taxon>asterids</taxon>
        <taxon>lamiids</taxon>
        <taxon>Solanales</taxon>
        <taxon>Solanaceae</taxon>
        <taxon>Nicotianoideae</taxon>
        <taxon>Nicotianeae</taxon>
        <taxon>Nicotiana</taxon>
    </lineage>
</organism>
<comment type="function">
    <text evidence="1">Component of the cytochrome b6-f complex, which mediates electron transfer between photosystem II (PSII) and photosystem I (PSI), cyclic electron flow around PSI, and state transitions. PetL is important for photoautotrophic growth as well as for electron transfer efficiency and stability of the cytochrome b6-f complex.</text>
</comment>
<comment type="subunit">
    <text evidence="1">The 4 large subunits of the cytochrome b6-f complex are cytochrome b6, subunit IV (17 kDa polypeptide, PetD), cytochrome f and the Rieske protein, while the 4 small subunits are PetG, PetL, PetM and PetN. The complex functions as a dimer.</text>
</comment>
<comment type="subcellular location">
    <subcellularLocation>
        <location evidence="1">Plastid</location>
        <location evidence="1">Chloroplast thylakoid membrane</location>
        <topology evidence="1">Single-pass membrane protein</topology>
    </subcellularLocation>
</comment>
<comment type="similarity">
    <text evidence="1">Belongs to the PetL family.</text>
</comment>
<feature type="chain" id="PRO_0000233678" description="Cytochrome b6-f complex subunit 6">
    <location>
        <begin position="1"/>
        <end position="31"/>
    </location>
</feature>
<feature type="transmembrane region" description="Helical" evidence="1">
    <location>
        <begin position="4"/>
        <end position="24"/>
    </location>
</feature>
<reference key="1">
    <citation type="journal article" date="2006" name="EMBO Rep.">
        <title>Maintenance of plastid RNA editing activities independently of their target sites.</title>
        <authorList>
            <person name="Tillich M."/>
            <person name="Poltnigg P."/>
            <person name="Kushnir S."/>
            <person name="Schmitz-Linneweber C."/>
        </authorList>
    </citation>
    <scope>NUCLEOTIDE SEQUENCE [GENOMIC DNA]</scope>
    <scope>ABSENCE OF RNA EDITING</scope>
    <source>
        <tissue>Leaf</tissue>
    </source>
</reference>
<sequence>MLTITSYFGFLLAALTITSALFIGLSKIRLI</sequence>
<proteinExistence type="evidence at transcript level"/>
<geneLocation type="chloroplast"/>
<evidence type="ECO:0000255" key="1">
    <source>
        <dbReference type="HAMAP-Rule" id="MF_00433"/>
    </source>
</evidence>
<gene>
    <name evidence="1" type="primary">petL</name>
</gene>
<accession>Q2UVE0</accession>
<keyword id="KW-0150">Chloroplast</keyword>
<keyword id="KW-0249">Electron transport</keyword>
<keyword id="KW-0472">Membrane</keyword>
<keyword id="KW-0602">Photosynthesis</keyword>
<keyword id="KW-0934">Plastid</keyword>
<keyword id="KW-0793">Thylakoid</keyword>
<keyword id="KW-0812">Transmembrane</keyword>
<keyword id="KW-1133">Transmembrane helix</keyword>
<keyword id="KW-0813">Transport</keyword>
<dbReference type="EMBL" id="AM177387">
    <property type="protein sequence ID" value="CAJ46678.1"/>
    <property type="molecule type" value="Genomic_DNA"/>
</dbReference>
<dbReference type="SMR" id="Q2UVE0"/>
<dbReference type="GO" id="GO:0009535">
    <property type="term" value="C:chloroplast thylakoid membrane"/>
    <property type="evidence" value="ECO:0007669"/>
    <property type="project" value="UniProtKB-SubCell"/>
</dbReference>
<dbReference type="GO" id="GO:0009512">
    <property type="term" value="C:cytochrome b6f complex"/>
    <property type="evidence" value="ECO:0007669"/>
    <property type="project" value="InterPro"/>
</dbReference>
<dbReference type="GO" id="GO:0045158">
    <property type="term" value="F:electron transporter, transferring electrons within cytochrome b6/f complex of photosystem II activity"/>
    <property type="evidence" value="ECO:0007669"/>
    <property type="project" value="UniProtKB-UniRule"/>
</dbReference>
<dbReference type="GO" id="GO:0015979">
    <property type="term" value="P:photosynthesis"/>
    <property type="evidence" value="ECO:0007669"/>
    <property type="project" value="UniProtKB-KW"/>
</dbReference>
<dbReference type="HAMAP" id="MF_00433">
    <property type="entry name" value="Cytb6_f_PetL"/>
    <property type="match status" value="1"/>
</dbReference>
<dbReference type="InterPro" id="IPR007802">
    <property type="entry name" value="Cyt_b6/f_cplx_su6"/>
</dbReference>
<dbReference type="PANTHER" id="PTHR37266">
    <property type="entry name" value="CYTOCHROME B6-F COMPLEX SUBUNIT 6"/>
    <property type="match status" value="1"/>
</dbReference>
<dbReference type="PANTHER" id="PTHR37266:SF1">
    <property type="entry name" value="CYTOCHROME B6-F COMPLEX SUBUNIT 6"/>
    <property type="match status" value="1"/>
</dbReference>
<dbReference type="Pfam" id="PF05115">
    <property type="entry name" value="PetL"/>
    <property type="match status" value="1"/>
</dbReference>
<dbReference type="SUPFAM" id="SSF103436">
    <property type="entry name" value="PetL subunit of the cytochrome b6f complex"/>
    <property type="match status" value="1"/>
</dbReference>